<organism>
    <name type="scientific">Nitrobacter hamburgensis (strain DSM 10229 / NCIMB 13809 / X14)</name>
    <dbReference type="NCBI Taxonomy" id="323097"/>
    <lineage>
        <taxon>Bacteria</taxon>
        <taxon>Pseudomonadati</taxon>
        <taxon>Pseudomonadota</taxon>
        <taxon>Alphaproteobacteria</taxon>
        <taxon>Hyphomicrobiales</taxon>
        <taxon>Nitrobacteraceae</taxon>
        <taxon>Nitrobacter</taxon>
    </lineage>
</organism>
<dbReference type="EC" id="3.5.2.9" evidence="1"/>
<dbReference type="EMBL" id="CP000319">
    <property type="protein sequence ID" value="ABE62840.1"/>
    <property type="molecule type" value="Genomic_DNA"/>
</dbReference>
<dbReference type="RefSeq" id="WP_011510519.1">
    <property type="nucleotide sequence ID" value="NC_007964.1"/>
</dbReference>
<dbReference type="SMR" id="Q1QLQ7"/>
<dbReference type="STRING" id="323097.Nham_2042"/>
<dbReference type="KEGG" id="nha:Nham_2042"/>
<dbReference type="eggNOG" id="COG1540">
    <property type="taxonomic scope" value="Bacteria"/>
</dbReference>
<dbReference type="HOGENOM" id="CLU_069535_0_0_5"/>
<dbReference type="OrthoDB" id="9773478at2"/>
<dbReference type="Proteomes" id="UP000001953">
    <property type="component" value="Chromosome"/>
</dbReference>
<dbReference type="GO" id="GO:0017168">
    <property type="term" value="F:5-oxoprolinase (ATP-hydrolyzing) activity"/>
    <property type="evidence" value="ECO:0007669"/>
    <property type="project" value="UniProtKB-UniRule"/>
</dbReference>
<dbReference type="GO" id="GO:0005524">
    <property type="term" value="F:ATP binding"/>
    <property type="evidence" value="ECO:0007669"/>
    <property type="project" value="UniProtKB-UniRule"/>
</dbReference>
<dbReference type="GO" id="GO:0005975">
    <property type="term" value="P:carbohydrate metabolic process"/>
    <property type="evidence" value="ECO:0007669"/>
    <property type="project" value="InterPro"/>
</dbReference>
<dbReference type="CDD" id="cd10787">
    <property type="entry name" value="LamB_YcsF_like"/>
    <property type="match status" value="1"/>
</dbReference>
<dbReference type="Gene3D" id="3.20.20.370">
    <property type="entry name" value="Glycoside hydrolase/deacetylase"/>
    <property type="match status" value="1"/>
</dbReference>
<dbReference type="HAMAP" id="MF_00691">
    <property type="entry name" value="PxpA"/>
    <property type="match status" value="1"/>
</dbReference>
<dbReference type="InterPro" id="IPR011330">
    <property type="entry name" value="Glyco_hydro/deAcase_b/a-brl"/>
</dbReference>
<dbReference type="InterPro" id="IPR005501">
    <property type="entry name" value="LamB/YcsF/PxpA-like"/>
</dbReference>
<dbReference type="NCBIfam" id="NF003814">
    <property type="entry name" value="PRK05406.1-3"/>
    <property type="match status" value="1"/>
</dbReference>
<dbReference type="NCBIfam" id="NF003816">
    <property type="entry name" value="PRK05406.1-5"/>
    <property type="match status" value="1"/>
</dbReference>
<dbReference type="PANTHER" id="PTHR30292:SF0">
    <property type="entry name" value="5-OXOPROLINASE SUBUNIT A"/>
    <property type="match status" value="1"/>
</dbReference>
<dbReference type="PANTHER" id="PTHR30292">
    <property type="entry name" value="UNCHARACTERIZED PROTEIN YBGL-RELATED"/>
    <property type="match status" value="1"/>
</dbReference>
<dbReference type="Pfam" id="PF03746">
    <property type="entry name" value="LamB_YcsF"/>
    <property type="match status" value="1"/>
</dbReference>
<dbReference type="SUPFAM" id="SSF88713">
    <property type="entry name" value="Glycoside hydrolase/deacetylase"/>
    <property type="match status" value="1"/>
</dbReference>
<name>PXPA_NITHX</name>
<feature type="chain" id="PRO_1000045212" description="5-oxoprolinase subunit A">
    <location>
        <begin position="1"/>
        <end position="255"/>
    </location>
</feature>
<protein>
    <recommendedName>
        <fullName evidence="1">5-oxoprolinase subunit A</fullName>
        <shortName evidence="1">5-OPase subunit A</shortName>
        <ecNumber evidence="1">3.5.2.9</ecNumber>
    </recommendedName>
    <alternativeName>
        <fullName evidence="1">5-oxoprolinase (ATP-hydrolyzing) subunit A</fullName>
    </alternativeName>
</protein>
<comment type="function">
    <text evidence="1">Catalyzes the cleavage of 5-oxoproline to form L-glutamate coupled to the hydrolysis of ATP to ADP and inorganic phosphate.</text>
</comment>
<comment type="catalytic activity">
    <reaction evidence="1">
        <text>5-oxo-L-proline + ATP + 2 H2O = L-glutamate + ADP + phosphate + H(+)</text>
        <dbReference type="Rhea" id="RHEA:10348"/>
        <dbReference type="ChEBI" id="CHEBI:15377"/>
        <dbReference type="ChEBI" id="CHEBI:15378"/>
        <dbReference type="ChEBI" id="CHEBI:29985"/>
        <dbReference type="ChEBI" id="CHEBI:30616"/>
        <dbReference type="ChEBI" id="CHEBI:43474"/>
        <dbReference type="ChEBI" id="CHEBI:58402"/>
        <dbReference type="ChEBI" id="CHEBI:456216"/>
        <dbReference type="EC" id="3.5.2.9"/>
    </reaction>
</comment>
<comment type="subunit">
    <text evidence="1">Forms a complex composed of PxpA, PxpB and PxpC.</text>
</comment>
<comment type="similarity">
    <text evidence="1">Belongs to the LamB/PxpA family.</text>
</comment>
<reference key="1">
    <citation type="submission" date="2006-03" db="EMBL/GenBank/DDBJ databases">
        <title>Complete sequence of chromosome of Nitrobacter hamburgensis X14.</title>
        <authorList>
            <consortium name="US DOE Joint Genome Institute"/>
            <person name="Copeland A."/>
            <person name="Lucas S."/>
            <person name="Lapidus A."/>
            <person name="Barry K."/>
            <person name="Detter J.C."/>
            <person name="Glavina del Rio T."/>
            <person name="Hammon N."/>
            <person name="Israni S."/>
            <person name="Dalin E."/>
            <person name="Tice H."/>
            <person name="Pitluck S."/>
            <person name="Chain P."/>
            <person name="Malfatti S."/>
            <person name="Shin M."/>
            <person name="Vergez L."/>
            <person name="Schmutz J."/>
            <person name="Larimer F."/>
            <person name="Land M."/>
            <person name="Hauser L."/>
            <person name="Kyrpides N."/>
            <person name="Ivanova N."/>
            <person name="Ward B."/>
            <person name="Arp D."/>
            <person name="Klotz M."/>
            <person name="Stein L."/>
            <person name="O'Mullan G."/>
            <person name="Starkenburg S."/>
            <person name="Sayavedra L."/>
            <person name="Poret-Peterson A.T."/>
            <person name="Gentry M.E."/>
            <person name="Bruce D."/>
            <person name="Richardson P."/>
        </authorList>
    </citation>
    <scope>NUCLEOTIDE SEQUENCE [LARGE SCALE GENOMIC DNA]</scope>
    <source>
        <strain>DSM 10229 / NCIMB 13809 / X14</strain>
    </source>
</reference>
<gene>
    <name evidence="1" type="primary">pxpA</name>
    <name type="ordered locus">Nham_2042</name>
</gene>
<evidence type="ECO:0000255" key="1">
    <source>
        <dbReference type="HAMAP-Rule" id="MF_00691"/>
    </source>
</evidence>
<keyword id="KW-0067">ATP-binding</keyword>
<keyword id="KW-0378">Hydrolase</keyword>
<keyword id="KW-0547">Nucleotide-binding</keyword>
<keyword id="KW-1185">Reference proteome</keyword>
<accession>Q1QLQ7</accession>
<proteinExistence type="inferred from homology"/>
<sequence length="255" mass="26747">MTIDLNCDLGESFGVWSMGNDAAMIDLATSVNIACGFHAGDADTMKKTVDLAKARGVSIGAHPGYRDLHGFGRRPVVGLSSSELENLVAYQIGALQAIATMAGHKVTHVKAHGALSNIACDDDMTARAIASAIKAVDPDLVFVVLANSRLVAAGEALGLSMVHEVFADRAYEDDGSLVSRRKPGAVLHDADAIAQRVVKMIQSGEVVSITGKTIKMRMDTVCIHGDTPGAVEIARALRKALKDNGIAVAPFKTAK</sequence>